<gene>
    <name evidence="3" type="primary">pelA</name>
</gene>
<sequence>MKKMLTLLLSAGLVASIFGVMPAAAAPTVVNSTIVVPKGTTYDGQGKTFVANPSTLGDGSQAENQKPVFRLEAGATLKNVIIGAPAADGVHCYGNCNISNVVWQDVGEDALTLKSSGTVNITGGAAYKAYDKVFQINAAGTINIKNFRADDIGKLVRQNGGTTFTVNMTLDNSNISNVKDAIMRTDSSSSQGRITNTRYSKVPTLFKGFASGKTSQSGNTQY</sequence>
<reference key="1">
    <citation type="journal article" date="2010" name="Appl. Environ. Microbiol.">
        <title>Characterization of two Paenibacillus amylolyticus strain 27C64 pectate lyases with activity on highly methylated pectin.</title>
        <authorList>
            <person name="Boland W.E."/>
            <person name="Henriksen E.D."/>
            <person name="Doran-Peterson J."/>
        </authorList>
    </citation>
    <scope>NUCLEOTIDE SEQUENCE [GENOMIC DNA]</scope>
    <scope>FUNCTION</scope>
    <scope>CATALYTIC ACTIVITY</scope>
    <scope>COFACTOR</scope>
    <scope>SUBSTRATE SPECIFICITY</scope>
    <scope>BIOPHYSICOCHEMICAL PROPERTIES</scope>
    <scope>PATHWAY</scope>
    <source>
        <strain>27C64</strain>
    </source>
</reference>
<comment type="function">
    <text evidence="2">Catalyzes the depolymerization of both polygalacturonate and pectins with low (20-34%) and high (90%) levels of methyl esterification, with an endo mode of action. In contrast to the majority of pectate lyases, displays high activity on highly methylated pectins. Does not show xylanase and cellulase activity.</text>
</comment>
<comment type="catalytic activity">
    <reaction evidence="2">
        <text>Eliminative cleavage of (1-&gt;4)-alpha-D-galacturonan to give oligosaccharides with 4-deoxy-alpha-D-galact-4-enuronosyl groups at their non-reducing ends.</text>
        <dbReference type="EC" id="4.2.2.2"/>
    </reaction>
</comment>
<comment type="catalytic activity">
    <reaction evidence="2">
        <text>Eliminative cleavage of (1-&gt;4)-alpha-D-galacturonan methyl ester to give oligosaccharides with 4-deoxy-6-O-methyl-alpha-D-galact-4-enuronosyl groups at their non-reducing ends.</text>
        <dbReference type="EC" id="4.2.2.10"/>
    </reaction>
</comment>
<comment type="cofactor">
    <cofactor evidence="2">
        <name>Ca(2+)</name>
        <dbReference type="ChEBI" id="CHEBI:29108"/>
    </cofactor>
</comment>
<comment type="biophysicochemical properties">
    <phDependence>
        <text evidence="2">Optimum pH is 10.5.</text>
    </phDependence>
    <temperatureDependence>
        <text evidence="2">Optimum temperature is 45 degrees Celsius.</text>
    </temperatureDependence>
</comment>
<comment type="pathway">
    <text evidence="2">Glycan metabolism; pectin degradation.</text>
</comment>
<comment type="subcellular location">
    <subcellularLocation>
        <location evidence="4">Secreted</location>
    </subcellularLocation>
</comment>
<comment type="similarity">
    <text evidence="4">Belongs to the polysaccharide lyase 3 family.</text>
</comment>
<proteinExistence type="evidence at protein level"/>
<evidence type="ECO:0000255" key="1"/>
<evidence type="ECO:0000269" key="2">
    <source>
    </source>
</evidence>
<evidence type="ECO:0000303" key="3">
    <source>
    </source>
</evidence>
<evidence type="ECO:0000305" key="4"/>
<evidence type="ECO:0000305" key="5">
    <source>
    </source>
</evidence>
<organism>
    <name type="scientific">Paenibacillus amylolyticus</name>
    <dbReference type="NCBI Taxonomy" id="1451"/>
    <lineage>
        <taxon>Bacteria</taxon>
        <taxon>Bacillati</taxon>
        <taxon>Bacillota</taxon>
        <taxon>Bacilli</taxon>
        <taxon>Bacillales</taxon>
        <taxon>Paenibacillaceae</taxon>
        <taxon>Paenibacillus</taxon>
    </lineage>
</organism>
<name>PLYA_PAEAM</name>
<accession>D3JTC1</accession>
<keyword id="KW-0106">Calcium</keyword>
<keyword id="KW-0119">Carbohydrate metabolism</keyword>
<keyword id="KW-0456">Lyase</keyword>
<keyword id="KW-0624">Polysaccharide degradation</keyword>
<keyword id="KW-0964">Secreted</keyword>
<keyword id="KW-0732">Signal</keyword>
<protein>
    <recommendedName>
        <fullName evidence="3">Pectate lyase A</fullName>
        <ecNumber evidence="2">4.2.2.2</ecNumber>
    </recommendedName>
    <alternativeName>
        <fullName evidence="5">Pectin lyase</fullName>
        <ecNumber evidence="2">4.2.2.10</ecNumber>
    </alternativeName>
</protein>
<dbReference type="EC" id="4.2.2.2" evidence="2"/>
<dbReference type="EC" id="4.2.2.10" evidence="2"/>
<dbReference type="EMBL" id="GU289919">
    <property type="protein sequence ID" value="ADB78774.1"/>
    <property type="molecule type" value="Genomic_DNA"/>
</dbReference>
<dbReference type="RefSeq" id="WP_192895056.1">
    <property type="nucleotide sequence ID" value="NZ_RIAS01000002.1"/>
</dbReference>
<dbReference type="SMR" id="D3JTC1"/>
<dbReference type="CAZy" id="PL3">
    <property type="family name" value="Polysaccharide Lyase Family 3"/>
</dbReference>
<dbReference type="BRENDA" id="4.2.2.2">
    <property type="organism ID" value="632"/>
</dbReference>
<dbReference type="UniPathway" id="UPA00545"/>
<dbReference type="GO" id="GO:0005576">
    <property type="term" value="C:extracellular region"/>
    <property type="evidence" value="ECO:0007669"/>
    <property type="project" value="UniProtKB-SubCell"/>
</dbReference>
<dbReference type="GO" id="GO:0005509">
    <property type="term" value="F:calcium ion binding"/>
    <property type="evidence" value="ECO:0000314"/>
    <property type="project" value="UniProtKB"/>
</dbReference>
<dbReference type="GO" id="GO:0030570">
    <property type="term" value="F:pectate lyase activity"/>
    <property type="evidence" value="ECO:0000314"/>
    <property type="project" value="UniProtKB"/>
</dbReference>
<dbReference type="GO" id="GO:0047490">
    <property type="term" value="F:pectin lyase activity"/>
    <property type="evidence" value="ECO:0000314"/>
    <property type="project" value="UniProtKB"/>
</dbReference>
<dbReference type="GO" id="GO:0045490">
    <property type="term" value="P:pectin catabolic process"/>
    <property type="evidence" value="ECO:0000314"/>
    <property type="project" value="UniProtKB"/>
</dbReference>
<dbReference type="FunFam" id="2.160.20.10:FF:000044">
    <property type="entry name" value="Pectate lyase E"/>
    <property type="match status" value="1"/>
</dbReference>
<dbReference type="Gene3D" id="2.160.20.10">
    <property type="entry name" value="Single-stranded right-handed beta-helix, Pectin lyase-like"/>
    <property type="match status" value="1"/>
</dbReference>
<dbReference type="InterPro" id="IPR004898">
    <property type="entry name" value="Pectate_lyase_PlyH/PlyE-like"/>
</dbReference>
<dbReference type="InterPro" id="IPR012334">
    <property type="entry name" value="Pectin_lyas_fold"/>
</dbReference>
<dbReference type="InterPro" id="IPR011050">
    <property type="entry name" value="Pectin_lyase_fold/virulence"/>
</dbReference>
<dbReference type="PANTHER" id="PTHR33407">
    <property type="entry name" value="PECTATE LYASE F-RELATED"/>
    <property type="match status" value="1"/>
</dbReference>
<dbReference type="PANTHER" id="PTHR33407:SF9">
    <property type="entry name" value="PECTATE LYASE F-RELATED"/>
    <property type="match status" value="1"/>
</dbReference>
<dbReference type="Pfam" id="PF03211">
    <property type="entry name" value="Pectate_lyase"/>
    <property type="match status" value="1"/>
</dbReference>
<dbReference type="SUPFAM" id="SSF51126">
    <property type="entry name" value="Pectin lyase-like"/>
    <property type="match status" value="1"/>
</dbReference>
<feature type="signal peptide" evidence="1">
    <location>
        <begin position="1"/>
        <end position="26"/>
    </location>
</feature>
<feature type="chain" id="PRO_5003047386" description="Pectate lyase A">
    <location>
        <begin position="27"/>
        <end position="222"/>
    </location>
</feature>